<proteinExistence type="inferred from homology"/>
<accession>B1IW76</accession>
<organism>
    <name type="scientific">Escherichia coli (strain ATCC 8739 / DSM 1576 / NBRC 3972 / NCIMB 8545 / WDCM 00012 / Crooks)</name>
    <dbReference type="NCBI Taxonomy" id="481805"/>
    <lineage>
        <taxon>Bacteria</taxon>
        <taxon>Pseudomonadati</taxon>
        <taxon>Pseudomonadota</taxon>
        <taxon>Gammaproteobacteria</taxon>
        <taxon>Enterobacterales</taxon>
        <taxon>Enterobacteriaceae</taxon>
        <taxon>Escherichia</taxon>
    </lineage>
</organism>
<comment type="function">
    <text evidence="1">Catalyzes the transfer of a methyl group from 5-methyltetrahydrofolate to homocysteine resulting in methionine formation.</text>
</comment>
<comment type="catalytic activity">
    <reaction evidence="1">
        <text>5-methyltetrahydropteroyltri-L-glutamate + L-homocysteine = tetrahydropteroyltri-L-glutamate + L-methionine</text>
        <dbReference type="Rhea" id="RHEA:21196"/>
        <dbReference type="ChEBI" id="CHEBI:57844"/>
        <dbReference type="ChEBI" id="CHEBI:58140"/>
        <dbReference type="ChEBI" id="CHEBI:58199"/>
        <dbReference type="ChEBI" id="CHEBI:58207"/>
        <dbReference type="EC" id="2.1.1.14"/>
    </reaction>
</comment>
<comment type="cofactor">
    <cofactor evidence="1">
        <name>Zn(2+)</name>
        <dbReference type="ChEBI" id="CHEBI:29105"/>
    </cofactor>
    <text evidence="1">Binds 1 zinc ion per subunit.</text>
</comment>
<comment type="pathway">
    <text evidence="1">Amino-acid biosynthesis; L-methionine biosynthesis via de novo pathway; L-methionine from L-homocysteine (MetE route): step 1/1.</text>
</comment>
<comment type="similarity">
    <text evidence="1">Belongs to the vitamin-B12 independent methionine synthase family.</text>
</comment>
<sequence length="753" mass="84726">MTILNHTLGFPRVGLRRELKKAQESYWAGNSTREELLTVGRELRARHWDQQKQAGIDLLPVGDFAWYDHVLTTSLLLGNVPPRHQNKDGSVDIDTLFRIGRGRAPTGEPAAAAEMTKWFNTNYHYMVPEFVKGQQFKLTWTQLLEEVDEALALGHNVKPVLLGPVTYLWLGKVKGEQFDRLSLLNDILPVYQQVLAELAKRGIEWVQIDEPALVLELPQAWLDAYKPAYDALQGQVKLLLTTYFEGVTPNLDTITALPVQGLHVDLVHGKDDVVELHKRLPSDWLLSAGLINGRNVWRADLTEKYAQIKDIVGKRDLWVASSCSLLHSPIDLSVETRLDAEVKSWFAFALQKCHELALLRDALNSGDTAALAEWSAPIQARRNSTRVHNPAVEKRLAAITAQDSQRANVYEVRAEAQRARFKLPAWPTTTIGSFPQTTEIRTLRLDFKKGNLDANNYRTGIAEHIRQAIVEQERLGLDVLVHGEAERNDMVEYFGEHLDGFVFTQNGWVQSYGSRCVKPPIVIGDVSRPAPITVEWAKYAQSLTDKPVKGMLTGPVTILCWSFPREDVSRETIAKQIALALRDEVADLEAAGIGIIQIDEPALREGLPLRRSDWDAYLQWGVEAFRINAAVAKDDTQIHTHMCYCEFNDIMDSIAALDADVITIETSRSDMELLESFEEFDYPNEIGPGVYDIHSPNVPSVEWIEALLKKAAKRIPAERLWVNPDCGLKTRGWPETRAALANMVQAAQNLRRG</sequence>
<evidence type="ECO:0000255" key="1">
    <source>
        <dbReference type="HAMAP-Rule" id="MF_00172"/>
    </source>
</evidence>
<gene>
    <name evidence="1" type="primary">metE</name>
    <name type="ordered locus">EcolC_4179</name>
</gene>
<reference key="1">
    <citation type="submission" date="2008-02" db="EMBL/GenBank/DDBJ databases">
        <title>Complete sequence of Escherichia coli C str. ATCC 8739.</title>
        <authorList>
            <person name="Copeland A."/>
            <person name="Lucas S."/>
            <person name="Lapidus A."/>
            <person name="Glavina del Rio T."/>
            <person name="Dalin E."/>
            <person name="Tice H."/>
            <person name="Bruce D."/>
            <person name="Goodwin L."/>
            <person name="Pitluck S."/>
            <person name="Kiss H."/>
            <person name="Brettin T."/>
            <person name="Detter J.C."/>
            <person name="Han C."/>
            <person name="Kuske C.R."/>
            <person name="Schmutz J."/>
            <person name="Larimer F."/>
            <person name="Land M."/>
            <person name="Hauser L."/>
            <person name="Kyrpides N."/>
            <person name="Mikhailova N."/>
            <person name="Ingram L."/>
            <person name="Richardson P."/>
        </authorList>
    </citation>
    <scope>NUCLEOTIDE SEQUENCE [LARGE SCALE GENOMIC DNA]</scope>
    <source>
        <strain>ATCC 8739 / DSM 1576 / NBRC 3972 / NCIMB 8545 / WDCM 00012 / Crooks</strain>
    </source>
</reference>
<keyword id="KW-0028">Amino-acid biosynthesis</keyword>
<keyword id="KW-0479">Metal-binding</keyword>
<keyword id="KW-0486">Methionine biosynthesis</keyword>
<keyword id="KW-0489">Methyltransferase</keyword>
<keyword id="KW-0677">Repeat</keyword>
<keyword id="KW-0808">Transferase</keyword>
<keyword id="KW-0862">Zinc</keyword>
<name>METE_ECOLC</name>
<dbReference type="EC" id="2.1.1.14" evidence="1"/>
<dbReference type="EMBL" id="CP000946">
    <property type="protein sequence ID" value="ACA79776.1"/>
    <property type="molecule type" value="Genomic_DNA"/>
</dbReference>
<dbReference type="RefSeq" id="WP_000153983.1">
    <property type="nucleotide sequence ID" value="NZ_MTFT01000015.1"/>
</dbReference>
<dbReference type="SMR" id="B1IW76"/>
<dbReference type="KEGG" id="ecl:EcolC_4179"/>
<dbReference type="HOGENOM" id="CLU_013175_0_0_6"/>
<dbReference type="UniPathway" id="UPA00051">
    <property type="reaction ID" value="UER00082"/>
</dbReference>
<dbReference type="GO" id="GO:0003871">
    <property type="term" value="F:5-methyltetrahydropteroyltriglutamate-homocysteine S-methyltransferase activity"/>
    <property type="evidence" value="ECO:0007669"/>
    <property type="project" value="UniProtKB-UniRule"/>
</dbReference>
<dbReference type="GO" id="GO:0008270">
    <property type="term" value="F:zinc ion binding"/>
    <property type="evidence" value="ECO:0007669"/>
    <property type="project" value="InterPro"/>
</dbReference>
<dbReference type="GO" id="GO:0009086">
    <property type="term" value="P:methionine biosynthetic process"/>
    <property type="evidence" value="ECO:0007669"/>
    <property type="project" value="UniProtKB-UniRule"/>
</dbReference>
<dbReference type="GO" id="GO:0032259">
    <property type="term" value="P:methylation"/>
    <property type="evidence" value="ECO:0007669"/>
    <property type="project" value="UniProtKB-KW"/>
</dbReference>
<dbReference type="CDD" id="cd03311">
    <property type="entry name" value="CIMS_C_terminal_like"/>
    <property type="match status" value="1"/>
</dbReference>
<dbReference type="CDD" id="cd03312">
    <property type="entry name" value="CIMS_N_terminal_like"/>
    <property type="match status" value="1"/>
</dbReference>
<dbReference type="FunFam" id="3.20.20.210:FF:000002">
    <property type="entry name" value="5-methyltetrahydropteroyltriglutamate--homocysteine methyltransferase"/>
    <property type="match status" value="1"/>
</dbReference>
<dbReference type="FunFam" id="3.20.20.210:FF:000003">
    <property type="entry name" value="5-methyltetrahydropteroyltriglutamate--homocysteine methyltransferase"/>
    <property type="match status" value="1"/>
</dbReference>
<dbReference type="Gene3D" id="3.20.20.210">
    <property type="match status" value="2"/>
</dbReference>
<dbReference type="HAMAP" id="MF_00172">
    <property type="entry name" value="Meth_synth"/>
    <property type="match status" value="1"/>
</dbReference>
<dbReference type="InterPro" id="IPR013215">
    <property type="entry name" value="Cbl-indep_Met_Synth_N"/>
</dbReference>
<dbReference type="InterPro" id="IPR006276">
    <property type="entry name" value="Cobalamin-indep_Met_synthase"/>
</dbReference>
<dbReference type="InterPro" id="IPR002629">
    <property type="entry name" value="Met_Synth_C/arc"/>
</dbReference>
<dbReference type="InterPro" id="IPR038071">
    <property type="entry name" value="UROD/MetE-like_sf"/>
</dbReference>
<dbReference type="NCBIfam" id="TIGR01371">
    <property type="entry name" value="met_syn_B12ind"/>
    <property type="match status" value="1"/>
</dbReference>
<dbReference type="NCBIfam" id="NF003556">
    <property type="entry name" value="PRK05222.1"/>
    <property type="match status" value="1"/>
</dbReference>
<dbReference type="PANTHER" id="PTHR30519">
    <property type="entry name" value="5-METHYLTETRAHYDROPTEROYLTRIGLUTAMATE--HOMOCYSTEINE METHYLTRANSFERASE"/>
    <property type="match status" value="1"/>
</dbReference>
<dbReference type="Pfam" id="PF08267">
    <property type="entry name" value="Meth_synt_1"/>
    <property type="match status" value="1"/>
</dbReference>
<dbReference type="Pfam" id="PF01717">
    <property type="entry name" value="Meth_synt_2"/>
    <property type="match status" value="1"/>
</dbReference>
<dbReference type="PIRSF" id="PIRSF000382">
    <property type="entry name" value="MeTrfase_B12_ind"/>
    <property type="match status" value="1"/>
</dbReference>
<dbReference type="SUPFAM" id="SSF51726">
    <property type="entry name" value="UROD/MetE-like"/>
    <property type="match status" value="2"/>
</dbReference>
<protein>
    <recommendedName>
        <fullName evidence="1">5-methyltetrahydropteroyltriglutamate--homocysteine methyltransferase</fullName>
        <ecNumber evidence="1">2.1.1.14</ecNumber>
    </recommendedName>
    <alternativeName>
        <fullName evidence="1">Cobalamin-independent methionine synthase</fullName>
    </alternativeName>
    <alternativeName>
        <fullName evidence="1">Methionine synthase, vitamin-B12 independent isozyme</fullName>
    </alternativeName>
</protein>
<feature type="chain" id="PRO_1000077113" description="5-methyltetrahydropteroyltriglutamate--homocysteine methyltransferase">
    <location>
        <begin position="1"/>
        <end position="753"/>
    </location>
</feature>
<feature type="active site" description="Proton donor" evidence="1">
    <location>
        <position position="694"/>
    </location>
</feature>
<feature type="binding site" evidence="1">
    <location>
        <begin position="17"/>
        <end position="20"/>
    </location>
    <ligand>
        <name>5-methyltetrahydropteroyltri-L-glutamate</name>
        <dbReference type="ChEBI" id="CHEBI:58207"/>
    </ligand>
</feature>
<feature type="binding site" evidence="1">
    <location>
        <position position="117"/>
    </location>
    <ligand>
        <name>5-methyltetrahydropteroyltri-L-glutamate</name>
        <dbReference type="ChEBI" id="CHEBI:58207"/>
    </ligand>
</feature>
<feature type="binding site" evidence="1">
    <location>
        <begin position="431"/>
        <end position="433"/>
    </location>
    <ligand>
        <name>L-homocysteine</name>
        <dbReference type="ChEBI" id="CHEBI:58199"/>
    </ligand>
</feature>
<feature type="binding site" evidence="1">
    <location>
        <begin position="431"/>
        <end position="433"/>
    </location>
    <ligand>
        <name>L-methionine</name>
        <dbReference type="ChEBI" id="CHEBI:57844"/>
    </ligand>
</feature>
<feature type="binding site" evidence="1">
    <location>
        <position position="484"/>
    </location>
    <ligand>
        <name>L-homocysteine</name>
        <dbReference type="ChEBI" id="CHEBI:58199"/>
    </ligand>
</feature>
<feature type="binding site" evidence="1">
    <location>
        <position position="484"/>
    </location>
    <ligand>
        <name>L-methionine</name>
        <dbReference type="ChEBI" id="CHEBI:57844"/>
    </ligand>
</feature>
<feature type="binding site" evidence="1">
    <location>
        <begin position="515"/>
        <end position="516"/>
    </location>
    <ligand>
        <name>5-methyltetrahydropteroyltri-L-glutamate</name>
        <dbReference type="ChEBI" id="CHEBI:58207"/>
    </ligand>
</feature>
<feature type="binding site" evidence="1">
    <location>
        <position position="561"/>
    </location>
    <ligand>
        <name>5-methyltetrahydropteroyltri-L-glutamate</name>
        <dbReference type="ChEBI" id="CHEBI:58207"/>
    </ligand>
</feature>
<feature type="binding site" evidence="1">
    <location>
        <position position="599"/>
    </location>
    <ligand>
        <name>L-homocysteine</name>
        <dbReference type="ChEBI" id="CHEBI:58199"/>
    </ligand>
</feature>
<feature type="binding site" evidence="1">
    <location>
        <position position="599"/>
    </location>
    <ligand>
        <name>L-methionine</name>
        <dbReference type="ChEBI" id="CHEBI:57844"/>
    </ligand>
</feature>
<feature type="binding site" evidence="1">
    <location>
        <position position="605"/>
    </location>
    <ligand>
        <name>5-methyltetrahydropteroyltri-L-glutamate</name>
        <dbReference type="ChEBI" id="CHEBI:58207"/>
    </ligand>
</feature>
<feature type="binding site" evidence="1">
    <location>
        <position position="641"/>
    </location>
    <ligand>
        <name>Zn(2+)</name>
        <dbReference type="ChEBI" id="CHEBI:29105"/>
        <note>catalytic</note>
    </ligand>
</feature>
<feature type="binding site" evidence="1">
    <location>
        <position position="643"/>
    </location>
    <ligand>
        <name>Zn(2+)</name>
        <dbReference type="ChEBI" id="CHEBI:29105"/>
        <note>catalytic</note>
    </ligand>
</feature>
<feature type="binding site" evidence="1">
    <location>
        <position position="665"/>
    </location>
    <ligand>
        <name>Zn(2+)</name>
        <dbReference type="ChEBI" id="CHEBI:29105"/>
        <note>catalytic</note>
    </ligand>
</feature>
<feature type="binding site" evidence="1">
    <location>
        <position position="726"/>
    </location>
    <ligand>
        <name>Zn(2+)</name>
        <dbReference type="ChEBI" id="CHEBI:29105"/>
        <note>catalytic</note>
    </ligand>
</feature>